<evidence type="ECO:0000250" key="1">
    <source>
        <dbReference type="UniProtKB" id="P49913"/>
    </source>
</evidence>
<evidence type="ECO:0000250" key="2">
    <source>
        <dbReference type="UniProtKB" id="P54229"/>
    </source>
</evidence>
<evidence type="ECO:0000255" key="3"/>
<evidence type="ECO:0000305" key="4"/>
<sequence>MKTQRDSPSLGRWSLVLLLLGLVMPLAIVAQVLSYQEAVLRAIDGINQRSSDANLYRLLDLDPRPTMDGDPDTPKPVSFTVKETVCPRTTQQSPEDCDFKKDGLVKRCMGTVTLNQARDSFDISCDKDNRRFALPGNFFRKAREKIGKEFKRIVQRIKDFLQHLVPRTEA</sequence>
<keyword id="KW-0044">Antibiotic</keyword>
<keyword id="KW-0929">Antimicrobial</keyword>
<keyword id="KW-0165">Cleavage on pair of basic residues</keyword>
<keyword id="KW-1015">Disulfide bond</keyword>
<keyword id="KW-0391">Immunity</keyword>
<keyword id="KW-0399">Innate immunity</keyword>
<keyword id="KW-0964">Secreted</keyword>
<keyword id="KW-0732">Signal</keyword>
<feature type="signal peptide" evidence="3">
    <location>
        <begin position="1"/>
        <end position="30"/>
    </location>
</feature>
<feature type="propeptide" id="PRO_0000251755" description="Cathelin-like domain (CLD)" evidence="1">
    <location>
        <begin position="31"/>
        <end position="131"/>
    </location>
</feature>
<feature type="peptide" id="PRO_0000251756" description="Antibacterial peptide FALL-39" evidence="1">
    <location>
        <begin position="132"/>
        <end position="170"/>
    </location>
</feature>
<feature type="peptide" id="PRO_0000251757" description="Antibacterial peptide LL-37" evidence="1">
    <location>
        <begin position="134"/>
        <end position="170"/>
    </location>
</feature>
<feature type="region of interest" description="Active core" evidence="1">
    <location>
        <begin position="150"/>
        <end position="162"/>
    </location>
</feature>
<feature type="disulfide bond" evidence="1">
    <location>
        <begin position="86"/>
        <end position="97"/>
    </location>
</feature>
<feature type="disulfide bond" evidence="1">
    <location>
        <begin position="108"/>
        <end position="125"/>
    </location>
</feature>
<protein>
    <recommendedName>
        <fullName evidence="1">Cathelicidin antimicrobial peptide</fullName>
    </recommendedName>
    <component>
        <recommendedName>
            <fullName evidence="1">Antibacterial peptide FALL-39</fullName>
        </recommendedName>
        <alternativeName>
            <fullName evidence="1">FALL-39 peptide antibiotic</fullName>
        </alternativeName>
    </component>
    <component>
        <recommendedName>
            <fullName evidence="1">Antibacterial peptide LL-37</fullName>
        </recommendedName>
    </component>
</protein>
<organism>
    <name type="scientific">Nomascus concolor</name>
    <name type="common">Black crested gibbon</name>
    <name type="synonym">Hylobates concolor</name>
    <dbReference type="NCBI Taxonomy" id="29089"/>
    <lineage>
        <taxon>Eukaryota</taxon>
        <taxon>Metazoa</taxon>
        <taxon>Chordata</taxon>
        <taxon>Craniata</taxon>
        <taxon>Vertebrata</taxon>
        <taxon>Euteleostomi</taxon>
        <taxon>Mammalia</taxon>
        <taxon>Eutheria</taxon>
        <taxon>Euarchontoglires</taxon>
        <taxon>Primates</taxon>
        <taxon>Haplorrhini</taxon>
        <taxon>Catarrhini</taxon>
        <taxon>Hylobatidae</taxon>
        <taxon>Nomascus</taxon>
    </lineage>
</organism>
<comment type="function">
    <text evidence="1">Antimicrobial protein that is an integral component of the innate immune system (By similarity). Binds to bacterial lipopolysaccharides (LPS) (By similarity). Acts via neutrophil N-formyl peptide receptors to enhance the release of CXCL2 (By similarity). Postsecretory processing generates multiple cathelicidin antimicrobial peptides with various lengths which act as a topical antimicrobial defense in sweat on skin (By similarity). The unprocessed precursor form, cathelicidin antimicrobial peptide, inhibits the growth of Gram-negative E.coli and E.aerogenes with efficiencies comparable to that of the mature peptide LL-37 (in vitro) (By similarity).</text>
</comment>
<comment type="function">
    <molecule>Antibacterial peptide LL-37</molecule>
    <text evidence="1">Antimicrobial peptide that is an integral component of the innate immune system (By similarity). Binds to bacterial lipopolysaccharides (LPS) (By similarity). Causes membrane permeabilization by forming transmembrane pores (in vitro) (By similarity). Causes lysis of E.coli (By similarity). Exhibits antimicrobial activity against Gram-negative bacteria such as P.aeruginosa, S.typhimurium, E.aerogenes, E.coli and P.syringae, Gram-positive bacteria such as L.monocytogenes, S.epidermidis, S.pyogenes and S.aureus, as well as vancomycin-resistant enterococci (in vitro) (By similarity). Exhibits antimicrobial activity against methicillin-resistant S.aureus, P.mirabilis, and C.albicans in low-salt media, but not in media containing 100 mM NaCl (in vitro) (By similarity). Forms chiral supramolecular assemblies with quinolone signal (PQS) molecules of P.aeruginosa, which may lead to interference of bacterial quorum signaling and perturbance of bacterial biofilm formation (By similarity). May form supramolecular fiber-like assemblies on bacterial membranes (By similarity). Induces cytokine and chemokine producation as well as TNF/TNFA and CSF2/GMCSF production in normal human keratinocytes (By similarity). Exhibits hemolytic activity against red blood cells (By similarity).</text>
</comment>
<comment type="function">
    <molecule>Antibacterial peptide FALL-39</molecule>
    <text evidence="1">Exhibits antimicrobial activity against E.coli and B.megaterium (in vitro).</text>
</comment>
<comment type="subunit">
    <molecule>Antibacterial peptide LL-37</molecule>
    <text evidence="1">Monomer, homodimer or homotrimer (in vitro) (By similarity). Oligomerizes as tetra- or hexamer in solution (in vitro) (By similarity).</text>
</comment>
<comment type="subcellular location">
    <subcellularLocation>
        <location evidence="2">Secreted</location>
    </subcellularLocation>
    <subcellularLocation>
        <location evidence="2">Vesicle</location>
    </subcellularLocation>
    <text evidence="2">Stored as pro-peptide in granules and phagolysosomes of neutrophils (By similarity). Secreted in sweat onto skin (By similarity).</text>
</comment>
<comment type="domain">
    <text evidence="2">The cathelin-like domain (CLD), which is the propeptide part, does not seem to exhibit auto-inhibitory function, as it does not inhibit the antibacterial activity of antibacterial peptide LL-37.</text>
</comment>
<comment type="domain">
    <molecule>Antibacterial peptide LL-37</molecule>
    <text evidence="2">Undergoes conformational change in the presence of lipid A, transitioning from a random coil to an alpha-helical structure.</text>
</comment>
<comment type="domain">
    <molecule>Antibacterial peptide LL-37</molecule>
    <text evidence="2">Residues 17-29 of LL-37 represent the active core of the antimicrobial peptide. Forms ribbon-like fibrils and exhibits antibacterial activity against Gram-positive M.luteus (By similarity). Also exhibits antibacterial activity against Gram-negative E.coli and P.fluorescens (By similarity).</text>
</comment>
<comment type="PTM">
    <text evidence="1">Proteolytically cleaved by proteinase PRTN3 into antibacterial peptide LL-37 (By similarity). Proteolytically cleaved by cathepsin CTSG and neutrophil elastase ELANE (By similarity).</text>
</comment>
<comment type="PTM">
    <molecule>Antibacterial peptide LL-37</molecule>
    <text evidence="1">Resistant to proteolytic degradation in solution, and when bound to both zwitterionic (mimicking mammalian membranes) and negatively charged membranes (mimicking bacterial membranes).</text>
</comment>
<comment type="PTM">
    <text evidence="1">After secretion onto the skin surface, the CAMP gene product is processed by a serine protease-dependent mechanism into multiple novel antimicrobial peptides distinct from and shorter than cathelicidin LL-37 (By similarity). These peptides show enhanced antimicrobial action, acquiring the ability to kill skin pathogens such as S.aureus, E.coli and C.albicans. These peptides have lost the ability to stimulate CXCL8/IL8 release from keratinocytes (By similarity). The peptides act synergistically, killing bacteria at lower concentrations when present together, and maintain activity at increased salt condition (By similarity).</text>
</comment>
<comment type="similarity">
    <text evidence="4">Belongs to the cathelicidin family.</text>
</comment>
<accession>Q1KLY0</accession>
<gene>
    <name evidence="1" type="primary">CAMP</name>
</gene>
<name>CAMP_NOMCO</name>
<reference key="1">
    <citation type="journal article" date="2006" name="J. Biol. Chem.">
        <title>Evolution of the primate cathelicidin. Correlation between structural variations and antimicrobial activity.</title>
        <authorList>
            <person name="Zelezetsky I."/>
            <person name="Pontillo A."/>
            <person name="Puzzi L."/>
            <person name="Antcheva N."/>
            <person name="Segat L."/>
            <person name="Pacor S."/>
            <person name="Crovella S."/>
            <person name="Tossi A."/>
        </authorList>
    </citation>
    <scope>NUCLEOTIDE SEQUENCE [GENOMIC DNA]</scope>
</reference>
<proteinExistence type="inferred from homology"/>
<dbReference type="EMBL" id="DQ471362">
    <property type="protein sequence ID" value="ABE96626.1"/>
    <property type="molecule type" value="Genomic_DNA"/>
</dbReference>
<dbReference type="SMR" id="Q1KLY0"/>
<dbReference type="GO" id="GO:0005615">
    <property type="term" value="C:extracellular space"/>
    <property type="evidence" value="ECO:0007669"/>
    <property type="project" value="TreeGrafter"/>
</dbReference>
<dbReference type="GO" id="GO:0031982">
    <property type="term" value="C:vesicle"/>
    <property type="evidence" value="ECO:0007669"/>
    <property type="project" value="UniProtKB-SubCell"/>
</dbReference>
<dbReference type="GO" id="GO:0001530">
    <property type="term" value="F:lipopolysaccharide binding"/>
    <property type="evidence" value="ECO:0007669"/>
    <property type="project" value="TreeGrafter"/>
</dbReference>
<dbReference type="GO" id="GO:0061844">
    <property type="term" value="P:antimicrobial humoral immune response mediated by antimicrobial peptide"/>
    <property type="evidence" value="ECO:0007669"/>
    <property type="project" value="TreeGrafter"/>
</dbReference>
<dbReference type="GO" id="GO:0050829">
    <property type="term" value="P:defense response to Gram-negative bacterium"/>
    <property type="evidence" value="ECO:0007669"/>
    <property type="project" value="TreeGrafter"/>
</dbReference>
<dbReference type="GO" id="GO:0050830">
    <property type="term" value="P:defense response to Gram-positive bacterium"/>
    <property type="evidence" value="ECO:0007669"/>
    <property type="project" value="TreeGrafter"/>
</dbReference>
<dbReference type="GO" id="GO:0045087">
    <property type="term" value="P:innate immune response"/>
    <property type="evidence" value="ECO:0007669"/>
    <property type="project" value="UniProtKB-KW"/>
</dbReference>
<dbReference type="GO" id="GO:0042119">
    <property type="term" value="P:neutrophil activation"/>
    <property type="evidence" value="ECO:0000250"/>
    <property type="project" value="UniProtKB"/>
</dbReference>
<dbReference type="FunFam" id="3.10.450.10:FF:000003">
    <property type="entry name" value="Cathelicidin antimicrobial peptide"/>
    <property type="match status" value="1"/>
</dbReference>
<dbReference type="Gene3D" id="3.10.450.10">
    <property type="match status" value="1"/>
</dbReference>
<dbReference type="InterPro" id="IPR001894">
    <property type="entry name" value="Cathelicidin-like"/>
</dbReference>
<dbReference type="InterPro" id="IPR018216">
    <property type="entry name" value="Cathelicidin_CS"/>
</dbReference>
<dbReference type="InterPro" id="IPR022746">
    <property type="entry name" value="Cathlecidin_C"/>
</dbReference>
<dbReference type="InterPro" id="IPR046350">
    <property type="entry name" value="Cystatin_sf"/>
</dbReference>
<dbReference type="PANTHER" id="PTHR10206">
    <property type="entry name" value="CATHELICIDIN"/>
    <property type="match status" value="1"/>
</dbReference>
<dbReference type="PANTHER" id="PTHR10206:SF2">
    <property type="entry name" value="CATHELICIDIN ANTIMICROBIAL PEPTIDE"/>
    <property type="match status" value="1"/>
</dbReference>
<dbReference type="Pfam" id="PF12153">
    <property type="entry name" value="CAP18_C"/>
    <property type="match status" value="1"/>
</dbReference>
<dbReference type="Pfam" id="PF00666">
    <property type="entry name" value="Cathelicidins"/>
    <property type="match status" value="1"/>
</dbReference>
<dbReference type="SUPFAM" id="SSF54403">
    <property type="entry name" value="Cystatin/monellin"/>
    <property type="match status" value="1"/>
</dbReference>
<dbReference type="PROSITE" id="PS00946">
    <property type="entry name" value="CATHELICIDINS_1"/>
    <property type="match status" value="1"/>
</dbReference>
<dbReference type="PROSITE" id="PS00947">
    <property type="entry name" value="CATHELICIDINS_2"/>
    <property type="match status" value="1"/>
</dbReference>